<reference key="1">
    <citation type="submission" date="2006-03" db="EMBL/GenBank/DDBJ databases">
        <title>Complete genome sequence of Gemmatimonas aurantiaca T-27 that represents a novel phylum Gemmatimonadetes.</title>
        <authorList>
            <person name="Takasaki K."/>
            <person name="Ichikawa N."/>
            <person name="Miura H."/>
            <person name="Matsushita S."/>
            <person name="Watanabe Y."/>
            <person name="Oguchi A."/>
            <person name="Ankai A."/>
            <person name="Yashiro I."/>
            <person name="Takahashi M."/>
            <person name="Terui Y."/>
            <person name="Fukui S."/>
            <person name="Yokoyama H."/>
            <person name="Tanikawa S."/>
            <person name="Hanada S."/>
            <person name="Kamagata Y."/>
            <person name="Fujita N."/>
        </authorList>
    </citation>
    <scope>NUCLEOTIDE SEQUENCE [LARGE SCALE GENOMIC DNA]</scope>
    <source>
        <strain>DSM 14586 / JCM 11422 / NBRC 100505 / T-27</strain>
    </source>
</reference>
<organism>
    <name type="scientific">Gemmatimonas aurantiaca (strain DSM 14586 / JCM 11422 / NBRC 100505 / T-27)</name>
    <dbReference type="NCBI Taxonomy" id="379066"/>
    <lineage>
        <taxon>Bacteria</taxon>
        <taxon>Pseudomonadati</taxon>
        <taxon>Gemmatimonadota</taxon>
        <taxon>Gemmatimonadia</taxon>
        <taxon>Gemmatimonadales</taxon>
        <taxon>Gemmatimonadaceae</taxon>
        <taxon>Gemmatimonas</taxon>
    </lineage>
</organism>
<dbReference type="EC" id="2.7.8.13" evidence="1"/>
<dbReference type="EMBL" id="AP009153">
    <property type="protein sequence ID" value="BAH38467.1"/>
    <property type="molecule type" value="Genomic_DNA"/>
</dbReference>
<dbReference type="RefSeq" id="WP_012682914.1">
    <property type="nucleotide sequence ID" value="NC_012489.1"/>
</dbReference>
<dbReference type="SMR" id="C1A8A7"/>
<dbReference type="STRING" id="379066.GAU_1425"/>
<dbReference type="KEGG" id="gau:GAU_1425"/>
<dbReference type="eggNOG" id="COG0472">
    <property type="taxonomic scope" value="Bacteria"/>
</dbReference>
<dbReference type="HOGENOM" id="CLU_023982_0_0_0"/>
<dbReference type="OrthoDB" id="9805475at2"/>
<dbReference type="UniPathway" id="UPA00219"/>
<dbReference type="Proteomes" id="UP000002209">
    <property type="component" value="Chromosome"/>
</dbReference>
<dbReference type="GO" id="GO:0005886">
    <property type="term" value="C:plasma membrane"/>
    <property type="evidence" value="ECO:0007669"/>
    <property type="project" value="UniProtKB-SubCell"/>
</dbReference>
<dbReference type="GO" id="GO:0046872">
    <property type="term" value="F:metal ion binding"/>
    <property type="evidence" value="ECO:0007669"/>
    <property type="project" value="UniProtKB-KW"/>
</dbReference>
<dbReference type="GO" id="GO:0008963">
    <property type="term" value="F:phospho-N-acetylmuramoyl-pentapeptide-transferase activity"/>
    <property type="evidence" value="ECO:0007669"/>
    <property type="project" value="UniProtKB-UniRule"/>
</dbReference>
<dbReference type="GO" id="GO:0051992">
    <property type="term" value="F:UDP-N-acetylmuramoyl-L-alanyl-D-glutamyl-meso-2,6-diaminopimelyl-D-alanyl-D-alanine:undecaprenyl-phosphate transferase activity"/>
    <property type="evidence" value="ECO:0007669"/>
    <property type="project" value="RHEA"/>
</dbReference>
<dbReference type="GO" id="GO:0051301">
    <property type="term" value="P:cell division"/>
    <property type="evidence" value="ECO:0007669"/>
    <property type="project" value="UniProtKB-KW"/>
</dbReference>
<dbReference type="GO" id="GO:0071555">
    <property type="term" value="P:cell wall organization"/>
    <property type="evidence" value="ECO:0007669"/>
    <property type="project" value="UniProtKB-KW"/>
</dbReference>
<dbReference type="GO" id="GO:0009252">
    <property type="term" value="P:peptidoglycan biosynthetic process"/>
    <property type="evidence" value="ECO:0007669"/>
    <property type="project" value="UniProtKB-UniRule"/>
</dbReference>
<dbReference type="GO" id="GO:0008360">
    <property type="term" value="P:regulation of cell shape"/>
    <property type="evidence" value="ECO:0007669"/>
    <property type="project" value="UniProtKB-KW"/>
</dbReference>
<dbReference type="CDD" id="cd06852">
    <property type="entry name" value="GT_MraY"/>
    <property type="match status" value="1"/>
</dbReference>
<dbReference type="HAMAP" id="MF_00038">
    <property type="entry name" value="MraY"/>
    <property type="match status" value="1"/>
</dbReference>
<dbReference type="InterPro" id="IPR000715">
    <property type="entry name" value="Glycosyl_transferase_4"/>
</dbReference>
<dbReference type="InterPro" id="IPR003524">
    <property type="entry name" value="PNAcMuramoyl-5peptid_Trfase"/>
</dbReference>
<dbReference type="InterPro" id="IPR018480">
    <property type="entry name" value="PNAcMuramoyl-5peptid_Trfase_CS"/>
</dbReference>
<dbReference type="NCBIfam" id="TIGR00445">
    <property type="entry name" value="mraY"/>
    <property type="match status" value="1"/>
</dbReference>
<dbReference type="PANTHER" id="PTHR22926">
    <property type="entry name" value="PHOSPHO-N-ACETYLMURAMOYL-PENTAPEPTIDE-TRANSFERASE"/>
    <property type="match status" value="1"/>
</dbReference>
<dbReference type="PANTHER" id="PTHR22926:SF5">
    <property type="entry name" value="PHOSPHO-N-ACETYLMURAMOYL-PENTAPEPTIDE-TRANSFERASE HOMOLOG"/>
    <property type="match status" value="1"/>
</dbReference>
<dbReference type="Pfam" id="PF00953">
    <property type="entry name" value="Glycos_transf_4"/>
    <property type="match status" value="1"/>
</dbReference>
<dbReference type="PROSITE" id="PS01347">
    <property type="entry name" value="MRAY_1"/>
    <property type="match status" value="1"/>
</dbReference>
<dbReference type="PROSITE" id="PS01348">
    <property type="entry name" value="MRAY_2"/>
    <property type="match status" value="1"/>
</dbReference>
<proteinExistence type="inferred from homology"/>
<accession>C1A8A7</accession>
<name>MRAY_GEMAT</name>
<sequence>MLYFLLQPLARDVRLFNLLNYITFRAAAAFVTALLVSFILGPAIIRRLRAMAVHQVVREGTPDTHAGKGTTPTMGGLIILAATFAPVLLWSRLSNRYVLLAMAVTAWMGVIGFLDDYLKLKQKREGKKNEGLVERYKLAGQVLCGLGLGAYLLLSPISTLPGASTTLPFFKYVLVVPAVAWAAWLYIPWVTFILTGVSNAVNLTDGLDGLSSGLVAIAVLTLGLFAYVLGRVDTSAYLQVFYLRGAGELTVFCAAVVGACIGFLWYNAHPAQVFMGDTGSLALGGAVGAIAILLKSEFLLLFVGAVFFAETVSVILQRTVFKYRLRRYGREYAQKHRVFRRAPLHHHFEMMGWPETQVVVRFWIIGILCAILALSTLKLR</sequence>
<protein>
    <recommendedName>
        <fullName evidence="1">Phospho-N-acetylmuramoyl-pentapeptide-transferase</fullName>
        <ecNumber evidence="1">2.7.8.13</ecNumber>
    </recommendedName>
    <alternativeName>
        <fullName evidence="1">UDP-MurNAc-pentapeptide phosphotransferase</fullName>
    </alternativeName>
</protein>
<evidence type="ECO:0000255" key="1">
    <source>
        <dbReference type="HAMAP-Rule" id="MF_00038"/>
    </source>
</evidence>
<gene>
    <name evidence="1" type="primary">mraY</name>
    <name type="ordered locus">GAU_1425</name>
</gene>
<comment type="function">
    <text evidence="1">Catalyzes the initial step of the lipid cycle reactions in the biosynthesis of the cell wall peptidoglycan: transfers peptidoglycan precursor phospho-MurNAc-pentapeptide from UDP-MurNAc-pentapeptide onto the lipid carrier undecaprenyl phosphate, yielding undecaprenyl-pyrophosphoryl-MurNAc-pentapeptide, known as lipid I.</text>
</comment>
<comment type="catalytic activity">
    <reaction evidence="1">
        <text>UDP-N-acetyl-alpha-D-muramoyl-L-alanyl-gamma-D-glutamyl-meso-2,6-diaminopimeloyl-D-alanyl-D-alanine + di-trans,octa-cis-undecaprenyl phosphate = di-trans,octa-cis-undecaprenyl diphospho-N-acetyl-alpha-D-muramoyl-L-alanyl-D-glutamyl-meso-2,6-diaminopimeloyl-D-alanyl-D-alanine + UMP</text>
        <dbReference type="Rhea" id="RHEA:28386"/>
        <dbReference type="ChEBI" id="CHEBI:57865"/>
        <dbReference type="ChEBI" id="CHEBI:60392"/>
        <dbReference type="ChEBI" id="CHEBI:61386"/>
        <dbReference type="ChEBI" id="CHEBI:61387"/>
        <dbReference type="EC" id="2.7.8.13"/>
    </reaction>
</comment>
<comment type="cofactor">
    <cofactor evidence="1">
        <name>Mg(2+)</name>
        <dbReference type="ChEBI" id="CHEBI:18420"/>
    </cofactor>
</comment>
<comment type="pathway">
    <text evidence="1">Cell wall biogenesis; peptidoglycan biosynthesis.</text>
</comment>
<comment type="subcellular location">
    <subcellularLocation>
        <location evidence="1">Cell inner membrane</location>
        <topology evidence="1">Multi-pass membrane protein</topology>
    </subcellularLocation>
</comment>
<comment type="similarity">
    <text evidence="1">Belongs to the glycosyltransferase 4 family. MraY subfamily.</text>
</comment>
<feature type="chain" id="PRO_1000202068" description="Phospho-N-acetylmuramoyl-pentapeptide-transferase">
    <location>
        <begin position="1"/>
        <end position="380"/>
    </location>
</feature>
<feature type="transmembrane region" description="Helical" evidence="1">
    <location>
        <begin position="25"/>
        <end position="45"/>
    </location>
</feature>
<feature type="transmembrane region" description="Helical" evidence="1">
    <location>
        <begin position="70"/>
        <end position="90"/>
    </location>
</feature>
<feature type="transmembrane region" description="Helical" evidence="1">
    <location>
        <begin position="98"/>
        <end position="118"/>
    </location>
</feature>
<feature type="transmembrane region" description="Helical" evidence="1">
    <location>
        <begin position="142"/>
        <end position="162"/>
    </location>
</feature>
<feature type="transmembrane region" description="Helical" evidence="1">
    <location>
        <begin position="173"/>
        <end position="193"/>
    </location>
</feature>
<feature type="transmembrane region" description="Helical" evidence="1">
    <location>
        <begin position="209"/>
        <end position="229"/>
    </location>
</feature>
<feature type="transmembrane region" description="Helical" evidence="1">
    <location>
        <begin position="245"/>
        <end position="265"/>
    </location>
</feature>
<feature type="transmembrane region" description="Helical" evidence="1">
    <location>
        <begin position="272"/>
        <end position="294"/>
    </location>
</feature>
<feature type="transmembrane region" description="Helical" evidence="1">
    <location>
        <begin position="357"/>
        <end position="377"/>
    </location>
</feature>
<keyword id="KW-0131">Cell cycle</keyword>
<keyword id="KW-0132">Cell division</keyword>
<keyword id="KW-0997">Cell inner membrane</keyword>
<keyword id="KW-1003">Cell membrane</keyword>
<keyword id="KW-0133">Cell shape</keyword>
<keyword id="KW-0961">Cell wall biogenesis/degradation</keyword>
<keyword id="KW-0460">Magnesium</keyword>
<keyword id="KW-0472">Membrane</keyword>
<keyword id="KW-0479">Metal-binding</keyword>
<keyword id="KW-0573">Peptidoglycan synthesis</keyword>
<keyword id="KW-1185">Reference proteome</keyword>
<keyword id="KW-0808">Transferase</keyword>
<keyword id="KW-0812">Transmembrane</keyword>
<keyword id="KW-1133">Transmembrane helix</keyword>